<comment type="function">
    <text evidence="1 2">Catalyzes two activities which are involved in the cyclic version of arginine biosynthesis: the synthesis of acetylglutamate from glutamate and acetyl-CoA, and of ornithine by transacetylation between acetylornithine and glutamate.</text>
</comment>
<comment type="catalytic activity">
    <reaction evidence="1">
        <text>N(2)-acetyl-L-ornithine + L-glutamate = N-acetyl-L-glutamate + L-ornithine</text>
        <dbReference type="Rhea" id="RHEA:15349"/>
        <dbReference type="ChEBI" id="CHEBI:29985"/>
        <dbReference type="ChEBI" id="CHEBI:44337"/>
        <dbReference type="ChEBI" id="CHEBI:46911"/>
        <dbReference type="ChEBI" id="CHEBI:57805"/>
        <dbReference type="EC" id="2.3.1.35"/>
    </reaction>
</comment>
<comment type="catalytic activity">
    <reaction evidence="1">
        <text>L-glutamate + acetyl-CoA = N-acetyl-L-glutamate + CoA + H(+)</text>
        <dbReference type="Rhea" id="RHEA:24292"/>
        <dbReference type="ChEBI" id="CHEBI:15378"/>
        <dbReference type="ChEBI" id="CHEBI:29985"/>
        <dbReference type="ChEBI" id="CHEBI:44337"/>
        <dbReference type="ChEBI" id="CHEBI:57287"/>
        <dbReference type="ChEBI" id="CHEBI:57288"/>
        <dbReference type="EC" id="2.3.1.1"/>
    </reaction>
</comment>
<comment type="biophysicochemical properties">
    <kinetics>
        <KM>3.4 mM for N(2)-acetyl-L-ornithine (at pH 7.0)</KM>
        <KM>17.8 mM for L-glutamate (at pH 7.0)</KM>
    </kinetics>
    <phDependence>
        <text>Optimum pH is 7.0.</text>
    </phDependence>
    <temperatureDependence>
        <text>Optimum temperature is 70 degrees Celsius.</text>
    </temperatureDependence>
</comment>
<comment type="pathway">
    <text evidence="1">Amino-acid biosynthesis; L-arginine biosynthesis; L-ornithine and N-acetyl-L-glutamate from L-glutamate and N(2)-acetyl-L-ornithine (cyclic): step 1/1.</text>
</comment>
<comment type="pathway">
    <text evidence="1">Amino-acid biosynthesis; L-arginine biosynthesis; N(2)-acetyl-L-ornithine from L-glutamate: step 1/4.</text>
</comment>
<comment type="subunit">
    <text evidence="1">Heterodimer of an alpha and a beta chain.</text>
</comment>
<comment type="subcellular location">
    <subcellularLocation>
        <location evidence="1">Plastid</location>
        <location evidence="1">Chloroplast</location>
    </subcellularLocation>
</comment>
<comment type="similarity">
    <text evidence="1">Belongs to the ArgJ family.</text>
</comment>
<feature type="transit peptide" description="Chloroplast" evidence="1 2">
    <location>
        <begin position="1"/>
        <end position="26"/>
    </location>
</feature>
<feature type="chain" id="PRO_0000397976" description="Arginine biosynthesis bifunctional protein ArgJ alpha chain">
    <location>
        <begin position="27"/>
        <end position="238"/>
    </location>
</feature>
<feature type="chain" id="PRO_0000397977" description="Arginine biosynthesis bifunctional protein ArgJ beta chain">
    <location>
        <begin position="239"/>
        <end position="460"/>
    </location>
</feature>
<feature type="active site" description="Nucleophile" evidence="1">
    <location>
        <position position="239"/>
    </location>
</feature>
<feature type="binding site" evidence="1">
    <location>
        <position position="202"/>
    </location>
    <ligand>
        <name>substrate</name>
    </ligand>
</feature>
<feature type="binding site" evidence="1">
    <location>
        <position position="228"/>
    </location>
    <ligand>
        <name>substrate</name>
    </ligand>
</feature>
<feature type="binding site" evidence="1">
    <location>
        <position position="239"/>
    </location>
    <ligand>
        <name>substrate</name>
    </ligand>
</feature>
<feature type="binding site" evidence="1">
    <location>
        <position position="328"/>
    </location>
    <ligand>
        <name>substrate</name>
    </ligand>
</feature>
<feature type="binding site" evidence="1">
    <location>
        <position position="455"/>
    </location>
    <ligand>
        <name>substrate</name>
    </ligand>
</feature>
<feature type="binding site" evidence="1">
    <location>
        <position position="460"/>
    </location>
    <ligand>
        <name>substrate</name>
    </ligand>
</feature>
<feature type="site" description="Involved in the stabilization of negative charge on the oxyanion by the formation of the oxyanion hole" evidence="1">
    <location>
        <position position="163"/>
    </location>
</feature>
<feature type="site" description="Involved in the stabilization of negative charge on the oxyanion by the formation of the oxyanion hole" evidence="1">
    <location>
        <position position="164"/>
    </location>
</feature>
<feature type="site" description="Cleavage; by autolysis" evidence="1">
    <location>
        <begin position="238"/>
        <end position="239"/>
    </location>
</feature>
<keyword id="KW-0012">Acyltransferase</keyword>
<keyword id="KW-0028">Amino-acid biosynthesis</keyword>
<keyword id="KW-0055">Arginine biosynthesis</keyword>
<keyword id="KW-0068">Autocatalytic cleavage</keyword>
<keyword id="KW-0150">Chloroplast</keyword>
<keyword id="KW-0903">Direct protein sequencing</keyword>
<keyword id="KW-0511">Multifunctional enzyme</keyword>
<keyword id="KW-0934">Plastid</keyword>
<keyword id="KW-0808">Transferase</keyword>
<keyword id="KW-0809">Transit peptide</keyword>
<reference key="1">
    <citation type="journal article" date="2005" name="FEBS J.">
        <title>Purification and characterization of glutamate N-acetyltransferase involved in citrulline accumulation in wild watermelon.</title>
        <authorList>
            <person name="Takahara K."/>
            <person name="Akashi K."/>
            <person name="Yokota A."/>
        </authorList>
    </citation>
    <scope>NUCLEOTIDE SEQUENCE [MRNA]</scope>
    <scope>PROTEIN SEQUENCE OF 27-41 AND 239-273</scope>
    <scope>SUBCELLULAR LOCATION</scope>
    <scope>FUNCTION</scope>
</reference>
<sequence length="460" mass="48203">MYLSVPHYPSLKFTAFQSHKRNFRVFAVATNEAANYLPEAPILIPDGPWKQIDGGVTAAKGFKAAGLYGGLRAKGEKPDLALVTCDVDAISAGAFTKNVVAAAPVLYCKKALDISETARAVLINAGQANAATGDAGYQDVIECVNNLSKILQIRPEEILVESTGVIGHRIKKDALLNSLPQLVRSLSSSVGGAASAAVAITTTDLVSKSVAIESQVGGSTIRIGGMAKGSGMIHPNMATMLGVVTTDAVVACDVWRKMVQISVDRSFNQITVDGDTSTNDTVIALSSGLSGFNSNIISSLKSREAGQLQECLDVVMQGLAKSIAWDGEGATCLIEITVSGASTEAEAAKVARSVAGSSLVKSAIYGRDPNWGRIAAAAGYAGVPFDQMKLKVSLGNILLMDGGEPQSFDRAAASNYLRRAGETHDTVRIFISIGDGQGEGRAWGCDLSYDYVKINAEYTT</sequence>
<organism>
    <name type="scientific">Citrullus lanatus</name>
    <name type="common">Watermelon</name>
    <name type="synonym">Citrullus vulgaris</name>
    <dbReference type="NCBI Taxonomy" id="3654"/>
    <lineage>
        <taxon>Eukaryota</taxon>
        <taxon>Viridiplantae</taxon>
        <taxon>Streptophyta</taxon>
        <taxon>Embryophyta</taxon>
        <taxon>Tracheophyta</taxon>
        <taxon>Spermatophyta</taxon>
        <taxon>Magnoliopsida</taxon>
        <taxon>eudicotyledons</taxon>
        <taxon>Gunneridae</taxon>
        <taxon>Pentapetalae</taxon>
        <taxon>rosids</taxon>
        <taxon>fabids</taxon>
        <taxon>Cucurbitales</taxon>
        <taxon>Cucurbitaceae</taxon>
        <taxon>Benincaseae</taxon>
        <taxon>Citrullus</taxon>
    </lineage>
</organism>
<proteinExistence type="evidence at protein level"/>
<name>ARGJ_CITLA</name>
<accession>Q3C251</accession>
<protein>
    <recommendedName>
        <fullName evidence="1">Arginine biosynthesis bifunctional protein ArgJ, chloroplastic</fullName>
    </recommendedName>
    <domain>
        <recommendedName>
            <fullName evidence="1">Glutamate N-acetyltransferase</fullName>
            <shortName evidence="1">GAT</shortName>
            <ecNumber evidence="1">2.3.1.35</ecNumber>
        </recommendedName>
        <alternativeName>
            <fullName evidence="1">Ornithine acetyltransferase</fullName>
            <shortName evidence="1">OATase</shortName>
        </alternativeName>
        <alternativeName>
            <fullName evidence="1">Ornithine transacetylase</fullName>
        </alternativeName>
    </domain>
    <domain>
        <recommendedName>
            <fullName evidence="1">Amino-acid acetyltransferase</fullName>
            <ecNumber evidence="1">2.3.1.1</ecNumber>
        </recommendedName>
        <alternativeName>
            <fullName evidence="1">N-acetylglutamate synthase</fullName>
            <shortName evidence="1">AGS</shortName>
        </alternativeName>
    </domain>
    <component>
        <recommendedName>
            <fullName evidence="1">Arginine biosynthesis bifunctional protein ArgJ alpha chain</fullName>
        </recommendedName>
    </component>
    <component>
        <recommendedName>
            <fullName evidence="1">Arginine biosynthesis bifunctional protein ArgJ beta chain</fullName>
        </recommendedName>
    </component>
</protein>
<evidence type="ECO:0000255" key="1">
    <source>
        <dbReference type="HAMAP-Rule" id="MF_03124"/>
    </source>
</evidence>
<evidence type="ECO:0000269" key="2">
    <source>
    </source>
</evidence>
<dbReference type="EC" id="2.3.1.35" evidence="1"/>
<dbReference type="EC" id="2.3.1.1" evidence="1"/>
<dbReference type="EMBL" id="AB212224">
    <property type="protein sequence ID" value="BAE46903.1"/>
    <property type="molecule type" value="mRNA"/>
</dbReference>
<dbReference type="SMR" id="Q3C251"/>
<dbReference type="MEROPS" id="T05.002"/>
<dbReference type="SABIO-RK" id="Q3C251"/>
<dbReference type="UniPathway" id="UPA00068">
    <property type="reaction ID" value="UER00106"/>
</dbReference>
<dbReference type="UniPathway" id="UPA00068">
    <property type="reaction ID" value="UER00111"/>
</dbReference>
<dbReference type="GO" id="GO:0009507">
    <property type="term" value="C:chloroplast"/>
    <property type="evidence" value="ECO:0007669"/>
    <property type="project" value="UniProtKB-SubCell"/>
</dbReference>
<dbReference type="GO" id="GO:0004358">
    <property type="term" value="F:glutamate N-acetyltransferase activity"/>
    <property type="evidence" value="ECO:0007669"/>
    <property type="project" value="UniProtKB-UniRule"/>
</dbReference>
<dbReference type="GO" id="GO:0004042">
    <property type="term" value="F:L-glutamate N-acetyltransferase activity"/>
    <property type="evidence" value="ECO:0007669"/>
    <property type="project" value="UniProtKB-UniRule"/>
</dbReference>
<dbReference type="GO" id="GO:0006526">
    <property type="term" value="P:L-arginine biosynthetic process"/>
    <property type="evidence" value="ECO:0007669"/>
    <property type="project" value="UniProtKB-UniRule"/>
</dbReference>
<dbReference type="GO" id="GO:0006592">
    <property type="term" value="P:ornithine biosynthetic process"/>
    <property type="evidence" value="ECO:0007669"/>
    <property type="project" value="TreeGrafter"/>
</dbReference>
<dbReference type="CDD" id="cd02152">
    <property type="entry name" value="OAT"/>
    <property type="match status" value="1"/>
</dbReference>
<dbReference type="FunFam" id="3.10.20.340:FF:000001">
    <property type="entry name" value="Arginine biosynthesis bifunctional protein ArgJ, chloroplastic"/>
    <property type="match status" value="1"/>
</dbReference>
<dbReference type="FunFam" id="3.60.70.12:FF:000001">
    <property type="entry name" value="Arginine biosynthesis bifunctional protein ArgJ, chloroplastic"/>
    <property type="match status" value="1"/>
</dbReference>
<dbReference type="Gene3D" id="3.10.20.340">
    <property type="entry name" value="ArgJ beta chain, C-terminal domain"/>
    <property type="match status" value="1"/>
</dbReference>
<dbReference type="Gene3D" id="3.60.70.12">
    <property type="entry name" value="L-amino peptidase D-ALA esterase/amidase"/>
    <property type="match status" value="1"/>
</dbReference>
<dbReference type="HAMAP" id="MF_01106">
    <property type="entry name" value="ArgJ"/>
    <property type="match status" value="1"/>
</dbReference>
<dbReference type="InterPro" id="IPR002813">
    <property type="entry name" value="Arg_biosynth_ArgJ"/>
</dbReference>
<dbReference type="InterPro" id="IPR016117">
    <property type="entry name" value="ArgJ-like_dom_sf"/>
</dbReference>
<dbReference type="InterPro" id="IPR042195">
    <property type="entry name" value="ArgJ_beta_C"/>
</dbReference>
<dbReference type="NCBIfam" id="TIGR00120">
    <property type="entry name" value="ArgJ"/>
    <property type="match status" value="1"/>
</dbReference>
<dbReference type="NCBIfam" id="NF003802">
    <property type="entry name" value="PRK05388.1"/>
    <property type="match status" value="1"/>
</dbReference>
<dbReference type="PANTHER" id="PTHR23100">
    <property type="entry name" value="ARGININE BIOSYNTHESIS BIFUNCTIONAL PROTEIN ARGJ"/>
    <property type="match status" value="1"/>
</dbReference>
<dbReference type="PANTHER" id="PTHR23100:SF0">
    <property type="entry name" value="ARGININE BIOSYNTHESIS BIFUNCTIONAL PROTEIN ARGJ, MITOCHONDRIAL"/>
    <property type="match status" value="1"/>
</dbReference>
<dbReference type="Pfam" id="PF01960">
    <property type="entry name" value="ArgJ"/>
    <property type="match status" value="1"/>
</dbReference>
<dbReference type="SUPFAM" id="SSF56266">
    <property type="entry name" value="DmpA/ArgJ-like"/>
    <property type="match status" value="1"/>
</dbReference>